<sequence>MSAPIIAIDAMGGDFGPRNIVQASLACLTATPSLHLALVGQASLIEELIASHAAVDRSRLRVVNATESIAMDERPSQALRGKSDSSMRVALELVSSGQAQACVSAGNTGALMALSRYVLKTLPGIDRPAMIAAIPTRTGHCQLLDLGANVDCSAEALYQFAVMGSVLAETLGVTKPRVALLNVGTEDIKGNQQVKLAAGLLQAAAGLNYIGYVEGDGVYRGEADVVVCDGFVGNVLLKSSEGLATMIAARIDALFNRNLLSRAVGALALPLLRRLQIDLAPARHNGASLLGLQGVVVKSHGSASVSGFQSAIQRAIVESREDLPQRLKGRLEVMFADGRT</sequence>
<gene>
    <name evidence="1" type="primary">plsX</name>
    <name type="ordered locus">PSPTO_3834</name>
</gene>
<feature type="chain" id="PRO_0000189924" description="Phosphate acyltransferase">
    <location>
        <begin position="1"/>
        <end position="340"/>
    </location>
</feature>
<reference key="1">
    <citation type="journal article" date="2003" name="Proc. Natl. Acad. Sci. U.S.A.">
        <title>The complete genome sequence of the Arabidopsis and tomato pathogen Pseudomonas syringae pv. tomato DC3000.</title>
        <authorList>
            <person name="Buell C.R."/>
            <person name="Joardar V."/>
            <person name="Lindeberg M."/>
            <person name="Selengut J."/>
            <person name="Paulsen I.T."/>
            <person name="Gwinn M.L."/>
            <person name="Dodson R.J."/>
            <person name="DeBoy R.T."/>
            <person name="Durkin A.S."/>
            <person name="Kolonay J.F."/>
            <person name="Madupu R."/>
            <person name="Daugherty S.C."/>
            <person name="Brinkac L.M."/>
            <person name="Beanan M.J."/>
            <person name="Haft D.H."/>
            <person name="Nelson W.C."/>
            <person name="Davidsen T.M."/>
            <person name="Zafar N."/>
            <person name="Zhou L."/>
            <person name="Liu J."/>
            <person name="Yuan Q."/>
            <person name="Khouri H.M."/>
            <person name="Fedorova N.B."/>
            <person name="Tran B."/>
            <person name="Russell D."/>
            <person name="Berry K.J."/>
            <person name="Utterback T.R."/>
            <person name="Van Aken S.E."/>
            <person name="Feldblyum T.V."/>
            <person name="D'Ascenzo M."/>
            <person name="Deng W.-L."/>
            <person name="Ramos A.R."/>
            <person name="Alfano J.R."/>
            <person name="Cartinhour S."/>
            <person name="Chatterjee A.K."/>
            <person name="Delaney T.P."/>
            <person name="Lazarowitz S.G."/>
            <person name="Martin G.B."/>
            <person name="Schneider D.J."/>
            <person name="Tang X."/>
            <person name="Bender C.L."/>
            <person name="White O."/>
            <person name="Fraser C.M."/>
            <person name="Collmer A."/>
        </authorList>
    </citation>
    <scope>NUCLEOTIDE SEQUENCE [LARGE SCALE GENOMIC DNA]</scope>
    <source>
        <strain>ATCC BAA-871 / DC3000</strain>
    </source>
</reference>
<organism>
    <name type="scientific">Pseudomonas syringae pv. tomato (strain ATCC BAA-871 / DC3000)</name>
    <dbReference type="NCBI Taxonomy" id="223283"/>
    <lineage>
        <taxon>Bacteria</taxon>
        <taxon>Pseudomonadati</taxon>
        <taxon>Pseudomonadota</taxon>
        <taxon>Gammaproteobacteria</taxon>
        <taxon>Pseudomonadales</taxon>
        <taxon>Pseudomonadaceae</taxon>
        <taxon>Pseudomonas</taxon>
    </lineage>
</organism>
<evidence type="ECO:0000255" key="1">
    <source>
        <dbReference type="HAMAP-Rule" id="MF_00019"/>
    </source>
</evidence>
<evidence type="ECO:0000305" key="2"/>
<name>PLSX_PSESM</name>
<proteinExistence type="inferred from homology"/>
<comment type="function">
    <text evidence="1">Catalyzes the reversible formation of acyl-phosphate (acyl-PO(4)) from acyl-[acyl-carrier-protein] (acyl-ACP). This enzyme utilizes acyl-ACP as fatty acyl donor, but not acyl-CoA.</text>
</comment>
<comment type="catalytic activity">
    <reaction evidence="1">
        <text>a fatty acyl-[ACP] + phosphate = an acyl phosphate + holo-[ACP]</text>
        <dbReference type="Rhea" id="RHEA:42292"/>
        <dbReference type="Rhea" id="RHEA-COMP:9685"/>
        <dbReference type="Rhea" id="RHEA-COMP:14125"/>
        <dbReference type="ChEBI" id="CHEBI:43474"/>
        <dbReference type="ChEBI" id="CHEBI:59918"/>
        <dbReference type="ChEBI" id="CHEBI:64479"/>
        <dbReference type="ChEBI" id="CHEBI:138651"/>
        <dbReference type="EC" id="2.3.1.274"/>
    </reaction>
</comment>
<comment type="pathway">
    <text evidence="1">Lipid metabolism; phospholipid metabolism.</text>
</comment>
<comment type="subunit">
    <text evidence="1">Homodimer. Probably interacts with PlsY.</text>
</comment>
<comment type="subcellular location">
    <subcellularLocation>
        <location evidence="1">Cytoplasm</location>
    </subcellularLocation>
    <text evidence="1">Associated with the membrane possibly through PlsY.</text>
</comment>
<comment type="similarity">
    <text evidence="1">Belongs to the PlsX family.</text>
</comment>
<comment type="sequence caution" evidence="2">
    <conflict type="erroneous initiation">
        <sequence resource="EMBL-CDS" id="AAO57302"/>
    </conflict>
</comment>
<protein>
    <recommendedName>
        <fullName evidence="1">Phosphate acyltransferase</fullName>
        <ecNumber evidence="1">2.3.1.274</ecNumber>
    </recommendedName>
    <alternativeName>
        <fullName evidence="1">Acyl-ACP phosphotransacylase</fullName>
    </alternativeName>
    <alternativeName>
        <fullName evidence="1">Acyl-[acyl-carrier-protein]--phosphate acyltransferase</fullName>
    </alternativeName>
    <alternativeName>
        <fullName evidence="1">Phosphate-acyl-ACP acyltransferase</fullName>
    </alternativeName>
</protein>
<dbReference type="EC" id="2.3.1.274" evidence="1"/>
<dbReference type="EMBL" id="AE016853">
    <property type="protein sequence ID" value="AAO57302.1"/>
    <property type="status" value="ALT_INIT"/>
    <property type="molecule type" value="Genomic_DNA"/>
</dbReference>
<dbReference type="RefSeq" id="NP_793607.1">
    <property type="nucleotide sequence ID" value="NC_004578.1"/>
</dbReference>
<dbReference type="RefSeq" id="WP_057443174.1">
    <property type="nucleotide sequence ID" value="NC_004578.1"/>
</dbReference>
<dbReference type="SMR" id="Q87YG5"/>
<dbReference type="STRING" id="223283.PSPTO_3834"/>
<dbReference type="GeneID" id="1185505"/>
<dbReference type="KEGG" id="pst:PSPTO_3834"/>
<dbReference type="PATRIC" id="fig|223283.9.peg.3931"/>
<dbReference type="eggNOG" id="COG0416">
    <property type="taxonomic scope" value="Bacteria"/>
</dbReference>
<dbReference type="HOGENOM" id="CLU_039379_1_0_6"/>
<dbReference type="OrthoDB" id="9806408at2"/>
<dbReference type="UniPathway" id="UPA00085"/>
<dbReference type="Proteomes" id="UP000002515">
    <property type="component" value="Chromosome"/>
</dbReference>
<dbReference type="GO" id="GO:0005737">
    <property type="term" value="C:cytoplasm"/>
    <property type="evidence" value="ECO:0007669"/>
    <property type="project" value="UniProtKB-SubCell"/>
</dbReference>
<dbReference type="GO" id="GO:0043811">
    <property type="term" value="F:phosphate:acyl-[acyl carrier protein] acyltransferase activity"/>
    <property type="evidence" value="ECO:0007669"/>
    <property type="project" value="UniProtKB-UniRule"/>
</dbReference>
<dbReference type="GO" id="GO:0006633">
    <property type="term" value="P:fatty acid biosynthetic process"/>
    <property type="evidence" value="ECO:0007669"/>
    <property type="project" value="UniProtKB-UniRule"/>
</dbReference>
<dbReference type="GO" id="GO:0008654">
    <property type="term" value="P:phospholipid biosynthetic process"/>
    <property type="evidence" value="ECO:0007669"/>
    <property type="project" value="UniProtKB-KW"/>
</dbReference>
<dbReference type="Gene3D" id="3.40.718.10">
    <property type="entry name" value="Isopropylmalate Dehydrogenase"/>
    <property type="match status" value="1"/>
</dbReference>
<dbReference type="HAMAP" id="MF_00019">
    <property type="entry name" value="PlsX"/>
    <property type="match status" value="1"/>
</dbReference>
<dbReference type="InterPro" id="IPR003664">
    <property type="entry name" value="FA_synthesis"/>
</dbReference>
<dbReference type="InterPro" id="IPR012281">
    <property type="entry name" value="Phospholipid_synth_PlsX-like"/>
</dbReference>
<dbReference type="NCBIfam" id="TIGR00182">
    <property type="entry name" value="plsX"/>
    <property type="match status" value="1"/>
</dbReference>
<dbReference type="PANTHER" id="PTHR30100">
    <property type="entry name" value="FATTY ACID/PHOSPHOLIPID SYNTHESIS PROTEIN PLSX"/>
    <property type="match status" value="1"/>
</dbReference>
<dbReference type="PANTHER" id="PTHR30100:SF1">
    <property type="entry name" value="PHOSPHATE ACYLTRANSFERASE"/>
    <property type="match status" value="1"/>
</dbReference>
<dbReference type="Pfam" id="PF02504">
    <property type="entry name" value="FA_synthesis"/>
    <property type="match status" value="1"/>
</dbReference>
<dbReference type="PIRSF" id="PIRSF002465">
    <property type="entry name" value="Phsphlp_syn_PlsX"/>
    <property type="match status" value="1"/>
</dbReference>
<dbReference type="SUPFAM" id="SSF53659">
    <property type="entry name" value="Isocitrate/Isopropylmalate dehydrogenase-like"/>
    <property type="match status" value="1"/>
</dbReference>
<accession>Q87YG5</accession>
<keyword id="KW-0963">Cytoplasm</keyword>
<keyword id="KW-0444">Lipid biosynthesis</keyword>
<keyword id="KW-0443">Lipid metabolism</keyword>
<keyword id="KW-0594">Phospholipid biosynthesis</keyword>
<keyword id="KW-1208">Phospholipid metabolism</keyword>
<keyword id="KW-1185">Reference proteome</keyword>
<keyword id="KW-0808">Transferase</keyword>